<proteinExistence type="evidence at transcript level"/>
<dbReference type="EMBL" id="BC045293">
    <property type="protein sequence ID" value="AAH45293.1"/>
    <property type="molecule type" value="mRNA"/>
</dbReference>
<dbReference type="SMR" id="Q7ZW46"/>
<dbReference type="FunCoup" id="Q7ZW46">
    <property type="interactions" value="1263"/>
</dbReference>
<dbReference type="STRING" id="7955.ENSDARP00000095658"/>
<dbReference type="PaxDb" id="7955-ENSDARP00000095658"/>
<dbReference type="AGR" id="ZFIN:ZDB-GENE-030131-2457"/>
<dbReference type="ZFIN" id="ZDB-GENE-030131-2457">
    <property type="gene designation" value="slc35b4"/>
</dbReference>
<dbReference type="eggNOG" id="KOG1583">
    <property type="taxonomic scope" value="Eukaryota"/>
</dbReference>
<dbReference type="InParanoid" id="Q7ZW46"/>
<dbReference type="PhylomeDB" id="Q7ZW46"/>
<dbReference type="Reactome" id="R-DRE-727802">
    <property type="pathway name" value="Transport of nucleotide sugars"/>
</dbReference>
<dbReference type="PRO" id="PR:Q7ZW46"/>
<dbReference type="Proteomes" id="UP000000437">
    <property type="component" value="Unplaced"/>
</dbReference>
<dbReference type="GO" id="GO:0005789">
    <property type="term" value="C:endoplasmic reticulum membrane"/>
    <property type="evidence" value="ECO:0000318"/>
    <property type="project" value="GO_Central"/>
</dbReference>
<dbReference type="GO" id="GO:0000139">
    <property type="term" value="C:Golgi membrane"/>
    <property type="evidence" value="ECO:0000318"/>
    <property type="project" value="GO_Central"/>
</dbReference>
<dbReference type="GO" id="GO:0005462">
    <property type="term" value="F:UDP-N-acetylglucosamine transmembrane transporter activity"/>
    <property type="evidence" value="ECO:0000318"/>
    <property type="project" value="GO_Central"/>
</dbReference>
<dbReference type="GO" id="GO:0005464">
    <property type="term" value="F:UDP-xylose transmembrane transporter activity"/>
    <property type="evidence" value="ECO:0000318"/>
    <property type="project" value="GO_Central"/>
</dbReference>
<dbReference type="GO" id="GO:1990569">
    <property type="term" value="P:UDP-N-acetylglucosamine transmembrane transport"/>
    <property type="evidence" value="ECO:0000318"/>
    <property type="project" value="GO_Central"/>
</dbReference>
<dbReference type="InterPro" id="IPR013657">
    <property type="entry name" value="SCL35B1-4/HUT1"/>
</dbReference>
<dbReference type="PANTHER" id="PTHR10778:SF4">
    <property type="entry name" value="NUCLEOTIDE SUGAR TRANSPORTER SLC35B4"/>
    <property type="match status" value="1"/>
</dbReference>
<dbReference type="PANTHER" id="PTHR10778">
    <property type="entry name" value="SOLUTE CARRIER FAMILY 35 MEMBER B"/>
    <property type="match status" value="1"/>
</dbReference>
<dbReference type="Pfam" id="PF08449">
    <property type="entry name" value="UAA"/>
    <property type="match status" value="1"/>
</dbReference>
<reference key="1">
    <citation type="submission" date="2003-01" db="EMBL/GenBank/DDBJ databases">
        <authorList>
            <consortium name="NIH - Zebrafish Gene Collection (ZGC) project"/>
        </authorList>
    </citation>
    <scope>NUCLEOTIDE SEQUENCE [LARGE SCALE MRNA]</scope>
    <source>
        <strain>AB</strain>
    </source>
</reference>
<feature type="chain" id="PRO_0000213389" description="UDP-xylose and UDP-N-acetylglucosamine transporter">
    <location>
        <begin position="1"/>
        <end position="331"/>
    </location>
</feature>
<feature type="transmembrane region" description="Helical" evidence="2">
    <location>
        <begin position="5"/>
        <end position="25"/>
    </location>
</feature>
<feature type="transmembrane region" description="Helical" evidence="2">
    <location>
        <begin position="30"/>
        <end position="50"/>
    </location>
</feature>
<feature type="transmembrane region" description="Helical" evidence="2">
    <location>
        <begin position="59"/>
        <end position="79"/>
    </location>
</feature>
<feature type="transmembrane region" description="Helical" evidence="2">
    <location>
        <begin position="92"/>
        <end position="112"/>
    </location>
</feature>
<feature type="transmembrane region" description="Helical" evidence="2">
    <location>
        <begin position="122"/>
        <end position="142"/>
    </location>
</feature>
<feature type="transmembrane region" description="Helical" evidence="2">
    <location>
        <begin position="153"/>
        <end position="173"/>
    </location>
</feature>
<feature type="transmembrane region" description="Helical" evidence="2">
    <location>
        <begin position="201"/>
        <end position="221"/>
    </location>
</feature>
<feature type="transmembrane region" description="Helical" evidence="2">
    <location>
        <begin position="238"/>
        <end position="260"/>
    </location>
</feature>
<feature type="transmembrane region" description="Helical" evidence="2">
    <location>
        <begin position="267"/>
        <end position="289"/>
    </location>
</feature>
<feature type="transmembrane region" description="Helical" evidence="2">
    <location>
        <begin position="301"/>
        <end position="321"/>
    </location>
</feature>
<accession>Q7ZW46</accession>
<keyword id="KW-0333">Golgi apparatus</keyword>
<keyword id="KW-0472">Membrane</keyword>
<keyword id="KW-1185">Reference proteome</keyword>
<keyword id="KW-0762">Sugar transport</keyword>
<keyword id="KW-0812">Transmembrane</keyword>
<keyword id="KW-1133">Transmembrane helix</keyword>
<keyword id="KW-0813">Transport</keyword>
<name>S35B4_DANRE</name>
<sequence>MNTLFAVTLVFVGCCSNVVFLELLVRDFPGCGNIVTFAQFAFIALEGFIFETNFGRKKPQIPLSNYVIMVTMFFTVSVINNYALDFNIAMPLHMIFRSGSLIANMILGIIILKNRYSMSKYLSIVLVSVGIFICTIMSAKQVNVEKGGTEEDGVYAFMHWLLGIAMLTFALLMSARMGIFQETLYKKYGKHSKEALFYNHCLPLPGFLLLSTNIYNHAVLFSQSPPMEVPVIGLSMPVMWFYLLMNVITQYVCIRGVFILTTECASLTVTLVVTLRKFLSLIISILYFQNPFTAWHWVGTAVVFLGTLLYTEVLSSIPAAFKGYKVDKKAE</sequence>
<evidence type="ECO:0000250" key="1"/>
<evidence type="ECO:0000255" key="2"/>
<evidence type="ECO:0000305" key="3"/>
<gene>
    <name type="primary">slc35b4</name>
    <name type="ORF">zgc:55288</name>
</gene>
<organism>
    <name type="scientific">Danio rerio</name>
    <name type="common">Zebrafish</name>
    <name type="synonym">Brachydanio rerio</name>
    <dbReference type="NCBI Taxonomy" id="7955"/>
    <lineage>
        <taxon>Eukaryota</taxon>
        <taxon>Metazoa</taxon>
        <taxon>Chordata</taxon>
        <taxon>Craniata</taxon>
        <taxon>Vertebrata</taxon>
        <taxon>Euteleostomi</taxon>
        <taxon>Actinopterygii</taxon>
        <taxon>Neopterygii</taxon>
        <taxon>Teleostei</taxon>
        <taxon>Ostariophysi</taxon>
        <taxon>Cypriniformes</taxon>
        <taxon>Danionidae</taxon>
        <taxon>Danioninae</taxon>
        <taxon>Danio</taxon>
    </lineage>
</organism>
<comment type="function">
    <text evidence="1">Sugar transporter that specifically mediates the transport of UDP-xylose (UDP-Xyl) and UDP-N-acetylglucosamine (UDP-GlcNAc) from cytosol into Golgi.</text>
</comment>
<comment type="subcellular location">
    <subcellularLocation>
        <location evidence="1">Golgi apparatus membrane</location>
        <topology evidence="1">Multi-pass membrane protein</topology>
    </subcellularLocation>
</comment>
<comment type="similarity">
    <text evidence="3">Belongs to the nucleotide-sugar transporter family. SLC35B subfamily.</text>
</comment>
<protein>
    <recommendedName>
        <fullName>UDP-xylose and UDP-N-acetylglucosamine transporter</fullName>
    </recommendedName>
    <alternativeName>
        <fullName>Solute carrier family 35 member B4</fullName>
    </alternativeName>
</protein>